<dbReference type="EC" id="7.1.1.9"/>
<dbReference type="EMBL" id="U18824">
    <property type="protein sequence ID" value="AAA75614.1"/>
    <property type="molecule type" value="Genomic_DNA"/>
</dbReference>
<dbReference type="RefSeq" id="YP_007626176.1">
    <property type="nucleotide sequence ID" value="NC_020709.1"/>
</dbReference>
<dbReference type="SMR" id="P50680"/>
<dbReference type="GeneID" id="14843082"/>
<dbReference type="CTD" id="4513"/>
<dbReference type="GO" id="GO:0005743">
    <property type="term" value="C:mitochondrial inner membrane"/>
    <property type="evidence" value="ECO:0007669"/>
    <property type="project" value="UniProtKB-SubCell"/>
</dbReference>
<dbReference type="GO" id="GO:0045277">
    <property type="term" value="C:respiratory chain complex IV"/>
    <property type="evidence" value="ECO:0000250"/>
    <property type="project" value="UniProtKB"/>
</dbReference>
<dbReference type="GO" id="GO:0005507">
    <property type="term" value="F:copper ion binding"/>
    <property type="evidence" value="ECO:0007669"/>
    <property type="project" value="InterPro"/>
</dbReference>
<dbReference type="GO" id="GO:0004129">
    <property type="term" value="F:cytochrome-c oxidase activity"/>
    <property type="evidence" value="ECO:0007669"/>
    <property type="project" value="UniProtKB-EC"/>
</dbReference>
<dbReference type="GO" id="GO:0042773">
    <property type="term" value="P:ATP synthesis coupled electron transport"/>
    <property type="evidence" value="ECO:0007669"/>
    <property type="project" value="TreeGrafter"/>
</dbReference>
<dbReference type="CDD" id="cd13912">
    <property type="entry name" value="CcO_II_C"/>
    <property type="match status" value="1"/>
</dbReference>
<dbReference type="FunFam" id="1.10.287.90:FF:000001">
    <property type="entry name" value="Cytochrome c oxidase subunit 2"/>
    <property type="match status" value="1"/>
</dbReference>
<dbReference type="FunFam" id="2.60.40.420:FF:000001">
    <property type="entry name" value="Cytochrome c oxidase subunit 2"/>
    <property type="match status" value="1"/>
</dbReference>
<dbReference type="Gene3D" id="1.10.287.90">
    <property type="match status" value="1"/>
</dbReference>
<dbReference type="Gene3D" id="2.60.40.420">
    <property type="entry name" value="Cupredoxins - blue copper proteins"/>
    <property type="match status" value="1"/>
</dbReference>
<dbReference type="InterPro" id="IPR045187">
    <property type="entry name" value="CcO_II"/>
</dbReference>
<dbReference type="InterPro" id="IPR002429">
    <property type="entry name" value="CcO_II-like_C"/>
</dbReference>
<dbReference type="InterPro" id="IPR034210">
    <property type="entry name" value="CcO_II_C"/>
</dbReference>
<dbReference type="InterPro" id="IPR001505">
    <property type="entry name" value="Copper_CuA"/>
</dbReference>
<dbReference type="InterPro" id="IPR008972">
    <property type="entry name" value="Cupredoxin"/>
</dbReference>
<dbReference type="InterPro" id="IPR014222">
    <property type="entry name" value="Cyt_c_oxidase_su2"/>
</dbReference>
<dbReference type="InterPro" id="IPR011759">
    <property type="entry name" value="Cyt_c_oxidase_su2_TM_dom"/>
</dbReference>
<dbReference type="InterPro" id="IPR036257">
    <property type="entry name" value="Cyt_c_oxidase_su2_TM_sf"/>
</dbReference>
<dbReference type="NCBIfam" id="TIGR02866">
    <property type="entry name" value="CoxB"/>
    <property type="match status" value="1"/>
</dbReference>
<dbReference type="PANTHER" id="PTHR22888:SF9">
    <property type="entry name" value="CYTOCHROME C OXIDASE SUBUNIT 2"/>
    <property type="match status" value="1"/>
</dbReference>
<dbReference type="PANTHER" id="PTHR22888">
    <property type="entry name" value="CYTOCHROME C OXIDASE, SUBUNIT II"/>
    <property type="match status" value="1"/>
</dbReference>
<dbReference type="Pfam" id="PF00116">
    <property type="entry name" value="COX2"/>
    <property type="match status" value="1"/>
</dbReference>
<dbReference type="Pfam" id="PF02790">
    <property type="entry name" value="COX2_TM"/>
    <property type="match status" value="1"/>
</dbReference>
<dbReference type="PRINTS" id="PR01166">
    <property type="entry name" value="CYCOXIDASEII"/>
</dbReference>
<dbReference type="SUPFAM" id="SSF49503">
    <property type="entry name" value="Cupredoxins"/>
    <property type="match status" value="1"/>
</dbReference>
<dbReference type="SUPFAM" id="SSF81464">
    <property type="entry name" value="Cytochrome c oxidase subunit II-like, transmembrane region"/>
    <property type="match status" value="1"/>
</dbReference>
<dbReference type="PROSITE" id="PS00078">
    <property type="entry name" value="COX2"/>
    <property type="match status" value="1"/>
</dbReference>
<dbReference type="PROSITE" id="PS50857">
    <property type="entry name" value="COX2_CUA"/>
    <property type="match status" value="1"/>
</dbReference>
<dbReference type="PROSITE" id="PS50999">
    <property type="entry name" value="COX2_TM"/>
    <property type="match status" value="1"/>
</dbReference>
<proteinExistence type="inferred from homology"/>
<gene>
    <name type="primary">MT-CO2</name>
    <name type="synonym">COII</name>
    <name type="synonym">COX2</name>
    <name type="synonym">COXII</name>
    <name type="synonym">MTCO2</name>
</gene>
<comment type="function">
    <text evidence="2">Component of the cytochrome c oxidase, the last enzyme in the mitochondrial electron transport chain which drives oxidative phosphorylation. The respiratory chain contains 3 multisubunit complexes succinate dehydrogenase (complex II, CII), ubiquinol-cytochrome c oxidoreductase (cytochrome b-c1 complex, complex III, CIII) and cytochrome c oxidase (complex IV, CIV), that cooperate to transfer electrons derived from NADH and succinate to molecular oxygen, creating an electrochemical gradient over the inner membrane that drives transmembrane transport and the ATP synthase. Cytochrome c oxidase is the component of the respiratory chain that catalyzes the reduction of oxygen to water. Electrons originating from reduced cytochrome c in the intermembrane space (IMS) are transferred via the dinuclear copper A center (CU(A)) of subunit 2 and heme A of subunit 1 to the active site in subunit 1, a binuclear center (BNC) formed by heme A3 and copper B (CU(B)). The BNC reduces molecular oxygen to 2 water molecules using 4 electrons from cytochrome c in the IMS and 4 protons from the mitochondrial matrix.</text>
</comment>
<comment type="catalytic activity">
    <reaction evidence="2">
        <text>4 Fe(II)-[cytochrome c] + O2 + 8 H(+)(in) = 4 Fe(III)-[cytochrome c] + 2 H2O + 4 H(+)(out)</text>
        <dbReference type="Rhea" id="RHEA:11436"/>
        <dbReference type="Rhea" id="RHEA-COMP:10350"/>
        <dbReference type="Rhea" id="RHEA-COMP:14399"/>
        <dbReference type="ChEBI" id="CHEBI:15377"/>
        <dbReference type="ChEBI" id="CHEBI:15378"/>
        <dbReference type="ChEBI" id="CHEBI:15379"/>
        <dbReference type="ChEBI" id="CHEBI:29033"/>
        <dbReference type="ChEBI" id="CHEBI:29034"/>
        <dbReference type="EC" id="7.1.1.9"/>
    </reaction>
    <physiologicalReaction direction="left-to-right" evidence="2">
        <dbReference type="Rhea" id="RHEA:11437"/>
    </physiologicalReaction>
</comment>
<comment type="cofactor">
    <cofactor evidence="3">
        <name>Cu cation</name>
        <dbReference type="ChEBI" id="CHEBI:23378"/>
    </cofactor>
    <text evidence="3">Binds a dinuclear copper A center per subunit.</text>
</comment>
<comment type="subunit">
    <text evidence="1 3">Component of the cytochrome c oxidase (complex IV, CIV), a multisubunit enzyme composed of 14 subunits. The complex is composed of a catalytic core of 3 subunits MT-CO1, MT-CO2 and MT-CO3, encoded in the mitochondrial DNA, and 11 supernumerary subunits COX4I, COX5A, COX5B, COX6A, COX6B, COX6C, COX7A, COX7B, COX7C, COX8 and NDUFA4, which are encoded in the nuclear genome. The complex exists as a monomer or a dimer and forms supercomplexes (SCs) in the inner mitochondrial membrane with NADH-ubiquinone oxidoreductase (complex I, CI) and ubiquinol-cytochrome c oxidoreductase (cytochrome b-c1 complex, complex III, CIII), resulting in different assemblies (supercomplex SCI(1)III(2)IV(1) and megacomplex MCI(2)III(2)IV(2)) (By similarity). Found in a complex with TMEM177, COA6, COX18, COX20, SCO1 and SCO2. Interacts with TMEM177 in a COX20-dependent manner. Interacts with COX20. Interacts with COX16 (By similarity).</text>
</comment>
<comment type="subcellular location">
    <subcellularLocation>
        <location evidence="3">Mitochondrion inner membrane</location>
        <topology evidence="3">Multi-pass membrane protein</topology>
    </subcellularLocation>
</comment>
<comment type="similarity">
    <text evidence="4">Belongs to the cytochrome c oxidase subunit 2 family.</text>
</comment>
<feature type="chain" id="PRO_0000183600" description="Cytochrome c oxidase subunit 2">
    <location>
        <begin position="1"/>
        <end position="227"/>
    </location>
</feature>
<feature type="topological domain" description="Mitochondrial intermembrane" evidence="3">
    <location>
        <begin position="1"/>
        <end position="14"/>
    </location>
</feature>
<feature type="transmembrane region" description="Helical; Name=I" evidence="3">
    <location>
        <begin position="15"/>
        <end position="45"/>
    </location>
</feature>
<feature type="topological domain" description="Mitochondrial matrix" evidence="3">
    <location>
        <begin position="46"/>
        <end position="59"/>
    </location>
</feature>
<feature type="transmembrane region" description="Helical; Name=II" evidence="3">
    <location>
        <begin position="60"/>
        <end position="87"/>
    </location>
</feature>
<feature type="topological domain" description="Mitochondrial intermembrane" evidence="3">
    <location>
        <begin position="88"/>
        <end position="227"/>
    </location>
</feature>
<feature type="binding site" evidence="3">
    <location>
        <position position="161"/>
    </location>
    <ligand>
        <name>Cu cation</name>
        <dbReference type="ChEBI" id="CHEBI:23378"/>
        <label>A1</label>
    </ligand>
</feature>
<feature type="binding site" evidence="3">
    <location>
        <position position="196"/>
    </location>
    <ligand>
        <name>Cu cation</name>
        <dbReference type="ChEBI" id="CHEBI:23378"/>
        <label>A1</label>
    </ligand>
</feature>
<feature type="binding site" evidence="3">
    <location>
        <position position="196"/>
    </location>
    <ligand>
        <name>Cu cation</name>
        <dbReference type="ChEBI" id="CHEBI:23378"/>
        <label>A2</label>
    </ligand>
</feature>
<feature type="binding site" evidence="3">
    <location>
        <position position="198"/>
    </location>
    <ligand>
        <name>Cu cation</name>
        <dbReference type="ChEBI" id="CHEBI:23378"/>
        <label>A2</label>
    </ligand>
</feature>
<feature type="binding site" evidence="3">
    <location>
        <position position="198"/>
    </location>
    <ligand>
        <name>Mg(2+)</name>
        <dbReference type="ChEBI" id="CHEBI:18420"/>
        <note>ligand shared with MT-CO1</note>
    </ligand>
</feature>
<feature type="binding site" evidence="3">
    <location>
        <position position="200"/>
    </location>
    <ligand>
        <name>Cu cation</name>
        <dbReference type="ChEBI" id="CHEBI:23378"/>
        <label>A1</label>
    </ligand>
</feature>
<feature type="binding site" evidence="3">
    <location>
        <position position="200"/>
    </location>
    <ligand>
        <name>Cu cation</name>
        <dbReference type="ChEBI" id="CHEBI:23378"/>
        <label>A2</label>
    </ligand>
</feature>
<feature type="binding site" evidence="3">
    <location>
        <position position="204"/>
    </location>
    <ligand>
        <name>Cu cation</name>
        <dbReference type="ChEBI" id="CHEBI:23378"/>
        <label>A2</label>
    </ligand>
</feature>
<feature type="binding site" evidence="3">
    <location>
        <position position="207"/>
    </location>
    <ligand>
        <name>Cu cation</name>
        <dbReference type="ChEBI" id="CHEBI:23378"/>
        <label>A1</label>
    </ligand>
</feature>
<protein>
    <recommendedName>
        <fullName>Cytochrome c oxidase subunit 2</fullName>
        <ecNumber>7.1.1.9</ecNumber>
    </recommendedName>
    <alternativeName>
        <fullName>Cytochrome c oxidase polypeptide II</fullName>
    </alternativeName>
</protein>
<evidence type="ECO:0000250" key="1">
    <source>
        <dbReference type="UniProtKB" id="P00403"/>
    </source>
</evidence>
<evidence type="ECO:0000250" key="2">
    <source>
        <dbReference type="UniProtKB" id="P00410"/>
    </source>
</evidence>
<evidence type="ECO:0000250" key="3">
    <source>
        <dbReference type="UniProtKB" id="P68530"/>
    </source>
</evidence>
<evidence type="ECO:0000305" key="4"/>
<name>COX2_GAZSP</name>
<organism>
    <name type="scientific">Gazella spekei</name>
    <name type="common">Speke's gazelle</name>
    <dbReference type="NCBI Taxonomy" id="69307"/>
    <lineage>
        <taxon>Eukaryota</taxon>
        <taxon>Metazoa</taxon>
        <taxon>Chordata</taxon>
        <taxon>Craniata</taxon>
        <taxon>Vertebrata</taxon>
        <taxon>Euteleostomi</taxon>
        <taxon>Mammalia</taxon>
        <taxon>Eutheria</taxon>
        <taxon>Laurasiatheria</taxon>
        <taxon>Artiodactyla</taxon>
        <taxon>Ruminantia</taxon>
        <taxon>Pecora</taxon>
        <taxon>Bovidae</taxon>
        <taxon>Antilopinae</taxon>
        <taxon>Gazella</taxon>
    </lineage>
</organism>
<keyword id="KW-0186">Copper</keyword>
<keyword id="KW-0249">Electron transport</keyword>
<keyword id="KW-0460">Magnesium</keyword>
<keyword id="KW-0472">Membrane</keyword>
<keyword id="KW-0479">Metal-binding</keyword>
<keyword id="KW-0496">Mitochondrion</keyword>
<keyword id="KW-0999">Mitochondrion inner membrane</keyword>
<keyword id="KW-0597">Phosphoprotein</keyword>
<keyword id="KW-0679">Respiratory chain</keyword>
<keyword id="KW-1278">Translocase</keyword>
<keyword id="KW-0812">Transmembrane</keyword>
<keyword id="KW-1133">Transmembrane helix</keyword>
<keyword id="KW-0813">Transport</keyword>
<geneLocation type="mitochondrion"/>
<reference key="1">
    <citation type="journal article" date="1995" name="J. Mol. Evol.">
        <title>Mammalian mitochondrial DNA evolution: a comparison of the cytochrome b and cytochrome c oxidase II genes.</title>
        <authorList>
            <person name="Honeycutt R.L."/>
            <person name="Nedbal M.A."/>
            <person name="Adkins R.M."/>
            <person name="Janecek L.L."/>
        </authorList>
    </citation>
    <scope>NUCLEOTIDE SEQUENCE [GENOMIC DNA]</scope>
</reference>
<accession>P50680</accession>
<sequence length="227" mass="26005">MAYPMQLGFQDATSPIMEELLHFHDHTLMIVFLISSLVLYVISLMLTTKLTHTSTMDAQEVETIWTILPAIILILIALPSLRILYMMDEINNPSLTVKTMGHQWYWSYEYTDYEDLSFDSYMIPTSELKPGELRLLEVDNRVVLPMEMTIRMLISSEDVLHSWAVPSLGLKTDAIPGRLNQTTLMSARPGLYYGQCSEICGSNHSFMPIVLELVPLKYFEKWSASML</sequence>